<sequence length="69" mass="7651">MSVLTPLLLRGLTGSARRLPVPRAKIHSLPPEEKLGIMELAVGLTSCFVTFLLPAGWILSHLETYRRPE</sequence>
<comment type="function">
    <text evidence="1">Component of the cytochrome c oxidase, the last enzyme in the mitochondrial electron transport chain which drives oxidative phosphorylation. The respiratory chain contains 3 multisubunit complexes succinate dehydrogenase (complex II, CII), ubiquinol-cytochrome c oxidoreductase (cytochrome b-c1 complex, complex III, CIII) and cytochrome c oxidase (complex IV, CIV), that cooperate to transfer electrons derived from NADH and succinate to molecular oxygen, creating an electrochemical gradient over the inner membrane that drives transmembrane transport and the ATP synthase. Cytochrome c oxidase is the component of the respiratory chain that catalyzes the reduction of oxygen to water. Electrons originating from reduced cytochrome c in the intermembrane space (IMS) are transferred via the dinuclear copper A center (CU(A)) of subunit 2 and heme A of subunit 1 to the active site in subunit 1, a binuclear center (BNC) formed by heme A3 and copper B (CU(B)). The BNC reduces molecular oxygen to 2 water molecules using 4 electrons from cytochrome c in the IMS and 4 protons from the mitochondrial matrix.</text>
</comment>
<comment type="pathway">
    <text evidence="1">Energy metabolism; oxidative phosphorylation.</text>
</comment>
<comment type="subunit">
    <text evidence="2">Component of the cytochrome c oxidase (complex IV, CIV), a multisubunit enzyme composed of 14 subunits. The complex is composed of a catalytic core of 3 subunits MT-CO1, MT-CO2 and MT-CO3, encoded in the mitochondrial DNA, and 11 supernumerary subunits COX4I, COX5A, COX5B, COX6A, COX6B, COX6C, COX7A, COX7B, COX7C, COX8 and NDUFA4, which are encoded in the nuclear genome. The complex exists as a monomer or a dimer and forms supercomplexes (SCs) in the inner mitochondrial membrane with NADH-ubiquinone oxidoreductase (complex I, CI) and ubiquinol-cytochrome c oxidoreductase (cytochrome b-c1 complex, complex III, CIII), resulting in different assemblies (supercomplex SCI(1)III(2)IV(1) and megacomplex MCI(2)III(2)IV(2)).</text>
</comment>
<comment type="subcellular location">
    <subcellularLocation>
        <location evidence="2">Mitochondrion inner membrane</location>
        <topology evidence="2">Single-pass membrane protein</topology>
    </subcellularLocation>
</comment>
<comment type="PTM">
    <text evidence="2">In response to mitochondrial stress, the precursor protein is ubiquitinated by the SIFI complex in the cytoplasm before mitochondrial import, leading to its degradation. Within the SIFI complex, UBR4 initiates ubiquitin chain that are further elongated or branched by KCMF1.</text>
</comment>
<comment type="similarity">
    <text evidence="3">Belongs to the cytochrome c oxidase VIII family.</text>
</comment>
<reference key="1">
    <citation type="submission" date="2001-09" db="EMBL/GenBank/DDBJ databases">
        <title>EST sequence screening of cynomolgus monkey cDNAs to find genes positively selected between hominoid and old monkey lineages.</title>
        <authorList>
            <person name="Osada N."/>
            <person name="Kusuda J."/>
            <person name="Hirata M."/>
            <person name="Tanuma R."/>
            <person name="Hida M."/>
            <person name="Sugano S."/>
            <person name="Hirai M."/>
            <person name="Hashimoto K."/>
        </authorList>
    </citation>
    <scope>NUCLEOTIDE SEQUENCE [GENOMIC DNA]</scope>
</reference>
<reference key="2">
    <citation type="journal article" date="2003" name="Proc. Natl. Acad. Sci. U.S.A.">
        <title>Adaptive evolution of cytochrome c oxidase subunit VIII in anthropoid primates.</title>
        <authorList>
            <person name="Goldberg A."/>
            <person name="Wildman D.E."/>
            <person name="Schmidt T.R."/>
            <person name="Huttemann M."/>
            <person name="Goodman M."/>
            <person name="Weiss M.L."/>
            <person name="Grossman L.I."/>
        </authorList>
    </citation>
    <scope>NUCLEOTIDE SEQUENCE [GENOMIC DNA]</scope>
</reference>
<reference key="3">
    <citation type="submission" date="2004-11" db="EMBL/GenBank/DDBJ databases">
        <authorList>
            <consortium name="The German cDNA consortium"/>
        </authorList>
    </citation>
    <scope>NUCLEOTIDE SEQUENCE [LARGE SCALE MRNA]</scope>
    <source>
        <tissue>Heart</tissue>
    </source>
</reference>
<organism>
    <name type="scientific">Pongo pygmaeus</name>
    <name type="common">Bornean orangutan</name>
    <dbReference type="NCBI Taxonomy" id="9600"/>
    <lineage>
        <taxon>Eukaryota</taxon>
        <taxon>Metazoa</taxon>
        <taxon>Chordata</taxon>
        <taxon>Craniata</taxon>
        <taxon>Vertebrata</taxon>
        <taxon>Euteleostomi</taxon>
        <taxon>Mammalia</taxon>
        <taxon>Eutheria</taxon>
        <taxon>Euarchontoglires</taxon>
        <taxon>Primates</taxon>
        <taxon>Haplorrhini</taxon>
        <taxon>Catarrhini</taxon>
        <taxon>Hominidae</taxon>
        <taxon>Pongo</taxon>
    </lineage>
</organism>
<protein>
    <recommendedName>
        <fullName>Cytochrome c oxidase subunit 8A, mitochondrial</fullName>
    </recommendedName>
    <alternativeName>
        <fullName>Cytochrome c oxidase polypeptide VIII-liver/heart</fullName>
    </alternativeName>
    <alternativeName>
        <fullName>Cytochrome c oxidase subunit 8-2</fullName>
    </alternativeName>
</protein>
<keyword id="KW-0472">Membrane</keyword>
<keyword id="KW-0496">Mitochondrion</keyword>
<keyword id="KW-0999">Mitochondrion inner membrane</keyword>
<keyword id="KW-0809">Transit peptide</keyword>
<keyword id="KW-0812">Transmembrane</keyword>
<keyword id="KW-1133">Transmembrane helix</keyword>
<keyword id="KW-0832">Ubl conjugation</keyword>
<dbReference type="EMBL" id="AB072329">
    <property type="protein sequence ID" value="BAB86879.1"/>
    <property type="molecule type" value="Genomic_DNA"/>
</dbReference>
<dbReference type="EMBL" id="AY254812">
    <property type="protein sequence ID" value="AAP32245.1"/>
    <property type="molecule type" value="Genomic_DNA"/>
</dbReference>
<dbReference type="EMBL" id="AY254811">
    <property type="protein sequence ID" value="AAP32245.1"/>
    <property type="status" value="JOINED"/>
    <property type="molecule type" value="Genomic_DNA"/>
</dbReference>
<dbReference type="EMBL" id="CR858519">
    <property type="protein sequence ID" value="CAH90746.1"/>
    <property type="molecule type" value="mRNA"/>
</dbReference>
<dbReference type="SMR" id="P60183"/>
<dbReference type="KEGG" id="pon:100172325"/>
<dbReference type="UniPathway" id="UPA00705"/>
<dbReference type="GO" id="GO:0005743">
    <property type="term" value="C:mitochondrial inner membrane"/>
    <property type="evidence" value="ECO:0007669"/>
    <property type="project" value="UniProtKB-SubCell"/>
</dbReference>
<dbReference type="GO" id="GO:0045277">
    <property type="term" value="C:respiratory chain complex IV"/>
    <property type="evidence" value="ECO:0007669"/>
    <property type="project" value="InterPro"/>
</dbReference>
<dbReference type="GO" id="GO:0006123">
    <property type="term" value="P:mitochondrial electron transport, cytochrome c to oxygen"/>
    <property type="evidence" value="ECO:0007669"/>
    <property type="project" value="InterPro"/>
</dbReference>
<dbReference type="CDD" id="cd00930">
    <property type="entry name" value="Cyt_c_Oxidase_VIII"/>
    <property type="match status" value="1"/>
</dbReference>
<dbReference type="FunFam" id="4.10.81.10:FF:000001">
    <property type="entry name" value="Cytochrome c oxidase subunit 8B, mitochondrial"/>
    <property type="match status" value="1"/>
</dbReference>
<dbReference type="Gene3D" id="4.10.81.10">
    <property type="entry name" value="Cytochrome c oxidase, subunit 8"/>
    <property type="match status" value="1"/>
</dbReference>
<dbReference type="InterPro" id="IPR003205">
    <property type="entry name" value="Cyt_c_oxidase_su8"/>
</dbReference>
<dbReference type="InterPro" id="IPR036548">
    <property type="entry name" value="Cyt_c_oxidase_su8_sf"/>
</dbReference>
<dbReference type="PANTHER" id="PTHR16717">
    <property type="entry name" value="CYTOCHROME C OXIDASE POLYPEPTIDE VIII"/>
    <property type="match status" value="1"/>
</dbReference>
<dbReference type="PANTHER" id="PTHR16717:SF1">
    <property type="entry name" value="CYTOCHROME C OXIDASE SUBUNIT 8A, MITOCHONDRIAL"/>
    <property type="match status" value="1"/>
</dbReference>
<dbReference type="Pfam" id="PF02285">
    <property type="entry name" value="COX8"/>
    <property type="match status" value="1"/>
</dbReference>
<dbReference type="SUPFAM" id="SSF81431">
    <property type="entry name" value="Mitochondrial cytochrome c oxidase subunit VIIIb (aka IX)"/>
    <property type="match status" value="1"/>
</dbReference>
<proteinExistence type="inferred from homology"/>
<feature type="transit peptide" description="Mitochondrion" evidence="2">
    <location>
        <begin position="1"/>
        <end position="25"/>
    </location>
</feature>
<feature type="chain" id="PRO_0000006195" description="Cytochrome c oxidase subunit 8A, mitochondrial">
    <location>
        <begin position="26"/>
        <end position="69"/>
    </location>
</feature>
<feature type="topological domain" description="Mitochondrial matrix" evidence="2">
    <location>
        <begin position="26"/>
        <end position="36"/>
    </location>
</feature>
<feature type="transmembrane region" description="Helical" evidence="1">
    <location>
        <begin position="37"/>
        <end position="60"/>
    </location>
</feature>
<feature type="topological domain" description="Mitochondrial intermembrane" evidence="2">
    <location>
        <begin position="61"/>
        <end position="69"/>
    </location>
</feature>
<feature type="short sequence motif" description="SIFI-degron" evidence="2">
    <location>
        <begin position="2"/>
        <end position="19"/>
    </location>
</feature>
<evidence type="ECO:0000250" key="1">
    <source>
        <dbReference type="UniProtKB" id="P10175"/>
    </source>
</evidence>
<evidence type="ECO:0000250" key="2">
    <source>
        <dbReference type="UniProtKB" id="P10176"/>
    </source>
</evidence>
<evidence type="ECO:0000305" key="3"/>
<name>COX8A_PONPY</name>
<accession>P60183</accession>
<accession>Q8SPF1</accession>
<gene>
    <name type="primary">COX8A</name>
    <name type="synonym">COX8</name>
    <name type="synonym">COX8L</name>
</gene>